<evidence type="ECO:0000250" key="1"/>
<evidence type="ECO:0000255" key="2">
    <source>
        <dbReference type="PROSITE-ProRule" id="PRU01163"/>
    </source>
</evidence>
<evidence type="ECO:0000305" key="3"/>
<evidence type="ECO:0007829" key="4">
    <source>
        <dbReference type="PDB" id="8JBW"/>
    </source>
</evidence>
<comment type="catalytic activity">
    <reaction>
        <text>3-(4-hydroxyphenyl)pyruvate + O2 = homogentisate + CO2</text>
        <dbReference type="Rhea" id="RHEA:16189"/>
        <dbReference type="ChEBI" id="CHEBI:15379"/>
        <dbReference type="ChEBI" id="CHEBI:16169"/>
        <dbReference type="ChEBI" id="CHEBI:16526"/>
        <dbReference type="ChEBI" id="CHEBI:36242"/>
        <dbReference type="EC" id="1.13.11.27"/>
    </reaction>
</comment>
<comment type="cofactor">
    <cofactor evidence="1">
        <name>Fe cation</name>
        <dbReference type="ChEBI" id="CHEBI:24875"/>
    </cofactor>
    <text evidence="1">Binds 1 Fe cation per subunit.</text>
</comment>
<comment type="pathway">
    <text>Amino-acid degradation; L-phenylalanine degradation; acetoacetate and fumarate from L-phenylalanine: step 3/6.</text>
</comment>
<comment type="similarity">
    <text evidence="3">Belongs to the 4HPPD family.</text>
</comment>
<organism>
    <name type="scientific">Zymoseptoria tritici</name>
    <name type="common">Speckled leaf blotch fungus</name>
    <name type="synonym">Septoria tritici</name>
    <dbReference type="NCBI Taxonomy" id="1047171"/>
    <lineage>
        <taxon>Eukaryota</taxon>
        <taxon>Fungi</taxon>
        <taxon>Dikarya</taxon>
        <taxon>Ascomycota</taxon>
        <taxon>Pezizomycotina</taxon>
        <taxon>Dothideomycetes</taxon>
        <taxon>Dothideomycetidae</taxon>
        <taxon>Mycosphaerellales</taxon>
        <taxon>Mycosphaerellaceae</taxon>
        <taxon>Zymoseptoria</taxon>
    </lineage>
</organism>
<protein>
    <recommendedName>
        <fullName>4-hydroxyphenylpyruvate dioxygenase</fullName>
        <shortName>4HPPD</shortName>
        <shortName>HPD</shortName>
        <shortName>HPPDase</shortName>
        <ecNumber>1.13.11.27</ecNumber>
    </recommendedName>
</protein>
<keyword id="KW-0002">3D-structure</keyword>
<keyword id="KW-0223">Dioxygenase</keyword>
<keyword id="KW-0408">Iron</keyword>
<keyword id="KW-0479">Metal-binding</keyword>
<keyword id="KW-0560">Oxidoreductase</keyword>
<keyword id="KW-0585">Phenylalanine catabolism</keyword>
<keyword id="KW-0677">Repeat</keyword>
<keyword id="KW-0828">Tyrosine catabolism</keyword>
<name>HPPD_ZYMTR</name>
<dbReference type="EC" id="1.13.11.27"/>
<dbReference type="EMBL" id="AF038152">
    <property type="protein sequence ID" value="AAC15884.1"/>
    <property type="molecule type" value="Genomic_DNA"/>
</dbReference>
<dbReference type="PDB" id="8JBW">
    <property type="method" value="X-ray"/>
    <property type="resolution" value="2.65 A"/>
    <property type="chains" value="A=1-419"/>
</dbReference>
<dbReference type="PDBsum" id="8JBW"/>
<dbReference type="SMR" id="O42764"/>
<dbReference type="VEuPathDB" id="FungiDB:ZT3D1_G6039"/>
<dbReference type="VEuPathDB" id="FungiDB:ZTRI_5.480"/>
<dbReference type="OMA" id="DMCSEYS"/>
<dbReference type="UniPathway" id="UPA00139">
    <property type="reaction ID" value="UER00362"/>
</dbReference>
<dbReference type="GO" id="GO:0003868">
    <property type="term" value="F:4-hydroxyphenylpyruvate dioxygenase activity"/>
    <property type="evidence" value="ECO:0007669"/>
    <property type="project" value="UniProtKB-EC"/>
</dbReference>
<dbReference type="GO" id="GO:0046872">
    <property type="term" value="F:metal ion binding"/>
    <property type="evidence" value="ECO:0007669"/>
    <property type="project" value="UniProtKB-KW"/>
</dbReference>
<dbReference type="GO" id="GO:0006559">
    <property type="term" value="P:L-phenylalanine catabolic process"/>
    <property type="evidence" value="ECO:0007669"/>
    <property type="project" value="UniProtKB-UniPathway"/>
</dbReference>
<dbReference type="GO" id="GO:0006572">
    <property type="term" value="P:tyrosine catabolic process"/>
    <property type="evidence" value="ECO:0007669"/>
    <property type="project" value="UniProtKB-KW"/>
</dbReference>
<dbReference type="CDD" id="cd07250">
    <property type="entry name" value="HPPD_C_like"/>
    <property type="match status" value="1"/>
</dbReference>
<dbReference type="CDD" id="cd08342">
    <property type="entry name" value="HPPD_N_like"/>
    <property type="match status" value="1"/>
</dbReference>
<dbReference type="FunFam" id="3.10.180.10:FF:000001">
    <property type="entry name" value="4-hydroxyphenylpyruvate dioxygenase"/>
    <property type="match status" value="1"/>
</dbReference>
<dbReference type="FunFam" id="3.10.180.10:FF:000020">
    <property type="entry name" value="4-hydroxyphenylpyruvate dioxygenase"/>
    <property type="match status" value="1"/>
</dbReference>
<dbReference type="Gene3D" id="3.10.180.10">
    <property type="entry name" value="2,3-Dihydroxybiphenyl 1,2-Dioxygenase, domain 1"/>
    <property type="match status" value="2"/>
</dbReference>
<dbReference type="InterPro" id="IPR005956">
    <property type="entry name" value="4OHPhenylPyrv_dOase"/>
</dbReference>
<dbReference type="InterPro" id="IPR041735">
    <property type="entry name" value="4OHPhenylPyrv_dOase_C"/>
</dbReference>
<dbReference type="InterPro" id="IPR041736">
    <property type="entry name" value="4OHPhenylPyrv_dOase_N"/>
</dbReference>
<dbReference type="InterPro" id="IPR029068">
    <property type="entry name" value="Glyas_Bleomycin-R_OHBP_Dase"/>
</dbReference>
<dbReference type="InterPro" id="IPR004360">
    <property type="entry name" value="Glyas_Fos-R_dOase_dom"/>
</dbReference>
<dbReference type="InterPro" id="IPR037523">
    <property type="entry name" value="VOC"/>
</dbReference>
<dbReference type="NCBIfam" id="TIGR01263">
    <property type="entry name" value="4HPPD"/>
    <property type="match status" value="1"/>
</dbReference>
<dbReference type="PANTHER" id="PTHR11959">
    <property type="entry name" value="4-HYDROXYPHENYLPYRUVATE DIOXYGENASE"/>
    <property type="match status" value="1"/>
</dbReference>
<dbReference type="PANTHER" id="PTHR11959:SF1">
    <property type="entry name" value="4-HYDROXYPHENYLPYRUVATE DIOXYGENASE"/>
    <property type="match status" value="1"/>
</dbReference>
<dbReference type="Pfam" id="PF00903">
    <property type="entry name" value="Glyoxalase"/>
    <property type="match status" value="2"/>
</dbReference>
<dbReference type="PIRSF" id="PIRSF009283">
    <property type="entry name" value="HPP_dOase"/>
    <property type="match status" value="1"/>
</dbReference>
<dbReference type="SUPFAM" id="SSF54593">
    <property type="entry name" value="Glyoxalase/Bleomycin resistance protein/Dihydroxybiphenyl dioxygenase"/>
    <property type="match status" value="1"/>
</dbReference>
<dbReference type="PROSITE" id="PS51819">
    <property type="entry name" value="VOC"/>
    <property type="match status" value="2"/>
</dbReference>
<feature type="chain" id="PRO_0000088405" description="4-hydroxyphenylpyruvate dioxygenase">
    <location>
        <begin position="1"/>
        <end position="419"/>
    </location>
</feature>
<feature type="domain" description="VOC 1" evidence="2">
    <location>
        <begin position="41"/>
        <end position="187"/>
    </location>
</feature>
<feature type="domain" description="VOC 2" evidence="2">
    <location>
        <begin position="218"/>
        <end position="376"/>
    </location>
</feature>
<feature type="binding site" evidence="1">
    <location>
        <position position="221"/>
    </location>
    <ligand>
        <name>Fe cation</name>
        <dbReference type="ChEBI" id="CHEBI:24875"/>
    </ligand>
</feature>
<feature type="binding site" evidence="1">
    <location>
        <position position="304"/>
    </location>
    <ligand>
        <name>Fe cation</name>
        <dbReference type="ChEBI" id="CHEBI:24875"/>
    </ligand>
</feature>
<feature type="binding site" evidence="1">
    <location>
        <position position="387"/>
    </location>
    <ligand>
        <name>Fe cation</name>
        <dbReference type="ChEBI" id="CHEBI:24875"/>
    </ligand>
</feature>
<feature type="strand" evidence="4">
    <location>
        <begin position="42"/>
        <end position="48"/>
    </location>
</feature>
<feature type="helix" evidence="4">
    <location>
        <begin position="52"/>
        <end position="63"/>
    </location>
</feature>
<feature type="strand" evidence="4">
    <location>
        <begin position="66"/>
        <end position="72"/>
    </location>
</feature>
<feature type="turn" evidence="4">
    <location>
        <begin position="73"/>
        <end position="76"/>
    </location>
</feature>
<feature type="strand" evidence="4">
    <location>
        <begin position="78"/>
        <end position="87"/>
    </location>
</feature>
<feature type="strand" evidence="4">
    <location>
        <begin position="90"/>
        <end position="99"/>
    </location>
</feature>
<feature type="helix" evidence="4">
    <location>
        <begin position="111"/>
        <end position="126"/>
    </location>
</feature>
<feature type="strand" evidence="4">
    <location>
        <begin position="129"/>
        <end position="137"/>
    </location>
</feature>
<feature type="helix" evidence="4">
    <location>
        <begin position="141"/>
        <end position="150"/>
    </location>
</feature>
<feature type="strand" evidence="4">
    <location>
        <begin position="154"/>
        <end position="164"/>
    </location>
</feature>
<feature type="strand" evidence="4">
    <location>
        <begin position="167"/>
        <end position="175"/>
    </location>
</feature>
<feature type="strand" evidence="4">
    <location>
        <begin position="181"/>
        <end position="189"/>
    </location>
</feature>
<feature type="strand" evidence="4">
    <location>
        <begin position="192"/>
        <end position="195"/>
    </location>
</feature>
<feature type="helix" evidence="4">
    <location>
        <begin position="206"/>
        <end position="209"/>
    </location>
</feature>
<feature type="strand" evidence="4">
    <location>
        <begin position="218"/>
        <end position="224"/>
    </location>
</feature>
<feature type="helix" evidence="4">
    <location>
        <begin position="228"/>
        <end position="239"/>
    </location>
</feature>
<feature type="strand" evidence="4">
    <location>
        <begin position="243"/>
        <end position="245"/>
    </location>
</feature>
<feature type="helix" evidence="4">
    <location>
        <begin position="250"/>
        <end position="260"/>
    </location>
</feature>
<feature type="turn" evidence="4">
    <location>
        <begin position="289"/>
        <end position="292"/>
    </location>
</feature>
<feature type="helix" evidence="4">
    <location>
        <begin position="293"/>
        <end position="298"/>
    </location>
</feature>
<feature type="strand" evidence="4">
    <location>
        <begin position="303"/>
        <end position="308"/>
    </location>
</feature>
<feature type="helix" evidence="4">
    <location>
        <begin position="312"/>
        <end position="322"/>
    </location>
</feature>
<feature type="helix" evidence="4">
    <location>
        <begin position="331"/>
        <end position="343"/>
    </location>
</feature>
<feature type="helix" evidence="4">
    <location>
        <begin position="352"/>
        <end position="357"/>
    </location>
</feature>
<feature type="strand" evidence="4">
    <location>
        <begin position="361"/>
        <end position="364"/>
    </location>
</feature>
<feature type="strand" evidence="4">
    <location>
        <begin position="369"/>
        <end position="376"/>
    </location>
</feature>
<feature type="strand" evidence="4">
    <location>
        <begin position="378"/>
        <end position="381"/>
    </location>
</feature>
<feature type="strand" evidence="4">
    <location>
        <begin position="384"/>
        <end position="393"/>
    </location>
</feature>
<feature type="helix" evidence="4">
    <location>
        <begin position="399"/>
        <end position="413"/>
    </location>
</feature>
<sequence length="419" mass="46740">MAPGALLVTSQNGRTSPLYDSDGYVPAPAALVVGGEVNYRGYHHAEWWVGNAKQVAQFYITRMGFEPVAHKGLETGSRFFASHVVQNNGVRFVFTSPVRSSARQTLKAAPLADQARLDEMYDHLDKHGDGVKDVAFEVDDVLAVYENAVANGAESVSSPHTDSCDEGDVISAAIKTYGDTTHTFIQRTTYTGPFLPGYRSCTTVDSANKFLPPVNLEAIDHCVGNQDWDEMSDACDFYERCLGFHRFWSVDDKDICTEFSALKSIVMSSPNQVVKMPINEPAHGKKKSQIEEYVDFYNGPGVQHIALRTPNIIEAVSNLRSRGVEFISVPDTYYENMRLRLKAAGMKLEESFDIIQKLNILIDFDEGGYLLQLFTKPLMDRPTVFIEIIQRNNFDGFGAGNFKSLFEAIEREQDLRGNL</sequence>
<accession>O42764</accession>
<reference key="1">
    <citation type="journal article" date="1998" name="FEMS Microbiol. Lett.">
        <title>Isolation and heterologous expression of a gene encoding 4-hydroxyphenylpyruvate dioxygenase from the wheat leaf-spot pathogen, Mycosphaerella graminicola.</title>
        <authorList>
            <person name="Keon J.P.R."/>
            <person name="Hargreaves J.A."/>
        </authorList>
    </citation>
    <scope>NUCLEOTIDE SEQUENCE [GENOMIC DNA]</scope>
    <source>
        <strain>LAST93</strain>
    </source>
</reference>
<proteinExistence type="evidence at protein level"/>
<gene>
    <name type="primary">HPPD</name>
</gene>